<feature type="chain" id="PRO_1000017963" description="Aspartate--ammonia ligase">
    <location>
        <begin position="1"/>
        <end position="330"/>
    </location>
</feature>
<accession>Q3K2R9</accession>
<name>ASNA_STRA1</name>
<keyword id="KW-0028">Amino-acid biosynthesis</keyword>
<keyword id="KW-0061">Asparagine biosynthesis</keyword>
<keyword id="KW-0067">ATP-binding</keyword>
<keyword id="KW-0963">Cytoplasm</keyword>
<keyword id="KW-0436">Ligase</keyword>
<keyword id="KW-0547">Nucleotide-binding</keyword>
<evidence type="ECO:0000255" key="1">
    <source>
        <dbReference type="HAMAP-Rule" id="MF_00555"/>
    </source>
</evidence>
<comment type="catalytic activity">
    <reaction evidence="1">
        <text>L-aspartate + NH4(+) + ATP = L-asparagine + AMP + diphosphate + H(+)</text>
        <dbReference type="Rhea" id="RHEA:11372"/>
        <dbReference type="ChEBI" id="CHEBI:15378"/>
        <dbReference type="ChEBI" id="CHEBI:28938"/>
        <dbReference type="ChEBI" id="CHEBI:29991"/>
        <dbReference type="ChEBI" id="CHEBI:30616"/>
        <dbReference type="ChEBI" id="CHEBI:33019"/>
        <dbReference type="ChEBI" id="CHEBI:58048"/>
        <dbReference type="ChEBI" id="CHEBI:456215"/>
        <dbReference type="EC" id="6.3.1.1"/>
    </reaction>
</comment>
<comment type="pathway">
    <text evidence="1">Amino-acid biosynthesis; L-asparagine biosynthesis; L-asparagine from L-aspartate (ammonia route): step 1/1.</text>
</comment>
<comment type="subcellular location">
    <subcellularLocation>
        <location evidence="1">Cytoplasm</location>
    </subcellularLocation>
</comment>
<comment type="similarity">
    <text evidence="1">Belongs to the class-II aminoacyl-tRNA synthetase family. AsnA subfamily.</text>
</comment>
<sequence>MKKSFIHQQQEISFVKNTFTQYLIDKLEIVEVQGPILSQVGDGMQDNLSGIEHPVSVKVLNIPEAEFEVVHSLAKWKRHTLARFGFNEGEGLFVHMKALRPDEDSLDPTHSVYVDQWDWEKVIPDGRRNLDYLKETVEKIYKAIRLTELAVEARFDIESILPKRITFIHTEELVEKYPDLSPKERENAIAKEYGAVFLIGIGGELADGKPHDGRAPDYDDWTTPSENGFKGLNGDILVWNEQLGTAFELSSMGIRVDEDALKRQVVLTGDEDRLEFEWHKTLLRGFFPLTIGGGIGQSRLAMFLLRKKHIGEVQSSVWPKEVRDTFENIL</sequence>
<dbReference type="EC" id="6.3.1.1" evidence="1"/>
<dbReference type="EMBL" id="CP000114">
    <property type="protein sequence ID" value="ABA45608.1"/>
    <property type="molecule type" value="Genomic_DNA"/>
</dbReference>
<dbReference type="RefSeq" id="WP_000748011.1">
    <property type="nucleotide sequence ID" value="NC_007432.1"/>
</dbReference>
<dbReference type="SMR" id="Q3K2R9"/>
<dbReference type="KEGG" id="sak:SAK_0552"/>
<dbReference type="HOGENOM" id="CLU_071543_0_0_9"/>
<dbReference type="UniPathway" id="UPA00134">
    <property type="reaction ID" value="UER00194"/>
</dbReference>
<dbReference type="GO" id="GO:0005829">
    <property type="term" value="C:cytosol"/>
    <property type="evidence" value="ECO:0007669"/>
    <property type="project" value="TreeGrafter"/>
</dbReference>
<dbReference type="GO" id="GO:0004071">
    <property type="term" value="F:aspartate-ammonia ligase activity"/>
    <property type="evidence" value="ECO:0007669"/>
    <property type="project" value="UniProtKB-UniRule"/>
</dbReference>
<dbReference type="GO" id="GO:0005524">
    <property type="term" value="F:ATP binding"/>
    <property type="evidence" value="ECO:0007669"/>
    <property type="project" value="UniProtKB-UniRule"/>
</dbReference>
<dbReference type="GO" id="GO:0140096">
    <property type="term" value="F:catalytic activity, acting on a protein"/>
    <property type="evidence" value="ECO:0007669"/>
    <property type="project" value="UniProtKB-ARBA"/>
</dbReference>
<dbReference type="GO" id="GO:0016740">
    <property type="term" value="F:transferase activity"/>
    <property type="evidence" value="ECO:0007669"/>
    <property type="project" value="UniProtKB-ARBA"/>
</dbReference>
<dbReference type="GO" id="GO:0070981">
    <property type="term" value="P:L-asparagine biosynthetic process"/>
    <property type="evidence" value="ECO:0007669"/>
    <property type="project" value="UniProtKB-UniRule"/>
</dbReference>
<dbReference type="CDD" id="cd00645">
    <property type="entry name" value="AsnA"/>
    <property type="match status" value="1"/>
</dbReference>
<dbReference type="Gene3D" id="3.30.930.10">
    <property type="entry name" value="Bira Bifunctional Protein, Domain 2"/>
    <property type="match status" value="1"/>
</dbReference>
<dbReference type="HAMAP" id="MF_00555">
    <property type="entry name" value="AsnA"/>
    <property type="match status" value="1"/>
</dbReference>
<dbReference type="InterPro" id="IPR006195">
    <property type="entry name" value="aa-tRNA-synth_II"/>
</dbReference>
<dbReference type="InterPro" id="IPR045864">
    <property type="entry name" value="aa-tRNA-synth_II/BPL/LPL"/>
</dbReference>
<dbReference type="InterPro" id="IPR004618">
    <property type="entry name" value="AsnA"/>
</dbReference>
<dbReference type="NCBIfam" id="TIGR00669">
    <property type="entry name" value="asnA"/>
    <property type="match status" value="1"/>
</dbReference>
<dbReference type="PANTHER" id="PTHR30073">
    <property type="entry name" value="ASPARTATE--AMMONIA LIGASE"/>
    <property type="match status" value="1"/>
</dbReference>
<dbReference type="PANTHER" id="PTHR30073:SF5">
    <property type="entry name" value="ASPARTATE--AMMONIA LIGASE"/>
    <property type="match status" value="1"/>
</dbReference>
<dbReference type="Pfam" id="PF03590">
    <property type="entry name" value="AsnA"/>
    <property type="match status" value="1"/>
</dbReference>
<dbReference type="PIRSF" id="PIRSF001555">
    <property type="entry name" value="Asp_ammon_ligase"/>
    <property type="match status" value="1"/>
</dbReference>
<dbReference type="SUPFAM" id="SSF55681">
    <property type="entry name" value="Class II aaRS and biotin synthetases"/>
    <property type="match status" value="1"/>
</dbReference>
<dbReference type="PROSITE" id="PS50862">
    <property type="entry name" value="AA_TRNA_LIGASE_II"/>
    <property type="match status" value="1"/>
</dbReference>
<reference key="1">
    <citation type="journal article" date="2005" name="Proc. Natl. Acad. Sci. U.S.A.">
        <title>Genome analysis of multiple pathogenic isolates of Streptococcus agalactiae: implications for the microbial 'pan-genome'.</title>
        <authorList>
            <person name="Tettelin H."/>
            <person name="Masignani V."/>
            <person name="Cieslewicz M.J."/>
            <person name="Donati C."/>
            <person name="Medini D."/>
            <person name="Ward N.L."/>
            <person name="Angiuoli S.V."/>
            <person name="Crabtree J."/>
            <person name="Jones A.L."/>
            <person name="Durkin A.S."/>
            <person name="DeBoy R.T."/>
            <person name="Davidsen T.M."/>
            <person name="Mora M."/>
            <person name="Scarselli M."/>
            <person name="Margarit y Ros I."/>
            <person name="Peterson J.D."/>
            <person name="Hauser C.R."/>
            <person name="Sundaram J.P."/>
            <person name="Nelson W.C."/>
            <person name="Madupu R."/>
            <person name="Brinkac L.M."/>
            <person name="Dodson R.J."/>
            <person name="Rosovitz M.J."/>
            <person name="Sullivan S.A."/>
            <person name="Daugherty S.C."/>
            <person name="Haft D.H."/>
            <person name="Selengut J."/>
            <person name="Gwinn M.L."/>
            <person name="Zhou L."/>
            <person name="Zafar N."/>
            <person name="Khouri H."/>
            <person name="Radune D."/>
            <person name="Dimitrov G."/>
            <person name="Watkins K."/>
            <person name="O'Connor K.J."/>
            <person name="Smith S."/>
            <person name="Utterback T.R."/>
            <person name="White O."/>
            <person name="Rubens C.E."/>
            <person name="Grandi G."/>
            <person name="Madoff L.C."/>
            <person name="Kasper D.L."/>
            <person name="Telford J.L."/>
            <person name="Wessels M.R."/>
            <person name="Rappuoli R."/>
            <person name="Fraser C.M."/>
        </authorList>
    </citation>
    <scope>NUCLEOTIDE SEQUENCE [LARGE SCALE GENOMIC DNA]</scope>
    <source>
        <strain>ATCC 27591 / A909 / CDC SS700</strain>
    </source>
</reference>
<gene>
    <name evidence="1" type="primary">asnA</name>
    <name type="ordered locus">SAK_0552</name>
</gene>
<proteinExistence type="inferred from homology"/>
<protein>
    <recommendedName>
        <fullName evidence="1">Aspartate--ammonia ligase</fullName>
        <ecNumber evidence="1">6.3.1.1</ecNumber>
    </recommendedName>
    <alternativeName>
        <fullName evidence="1">Asparagine synthetase A</fullName>
    </alternativeName>
</protein>
<organism>
    <name type="scientific">Streptococcus agalactiae serotype Ia (strain ATCC 27591 / A909 / CDC SS700)</name>
    <dbReference type="NCBI Taxonomy" id="205921"/>
    <lineage>
        <taxon>Bacteria</taxon>
        <taxon>Bacillati</taxon>
        <taxon>Bacillota</taxon>
        <taxon>Bacilli</taxon>
        <taxon>Lactobacillales</taxon>
        <taxon>Streptococcaceae</taxon>
        <taxon>Streptococcus</taxon>
    </lineage>
</organism>